<sequence length="479" mass="51742">MNYLPIFLDLRDRHCLVVGGSETAARKAELLLRAGAHVAVAAPALHAGFEQLPDRQRLTRVADTFSPALLDGKDAVIVVEDDAAAAQIVADAARARHLPVNVADKPALCSFILPSIIDRSPIMVAVSSGGESPVLARLLRARLETLIPAAYGRLSALASRYKARVREAIQPGQRRAFWEKVFLSSVAEMVFSGRDSEAEAQLEAMIKDSAAHEPARGEVYLVGAGPGNPDLLTFRALRLMQQADVVVYDRLVSQPILDMCRRDAERIYVGKERDDHAVPQEEINMMLVRLAKEGKRTLRLKGGDPFIFGRGGEEIETLVEHGVAFQVVPGITAAAGVASYAGIPLTHRDYAQSVAFVTGHLKENTFNMNWEGIARRDQTIVIYMGLKGLPMLCEALIKHGLTADTPAAIVQHGTLPTQRVITGTLATLPTLAVEAGLKAPTLIIVGNVVKLREKLAWYRPQAAGEAAAATPLEAPDHLA</sequence>
<comment type="function">
    <text evidence="1">Multifunctional enzyme that catalyzes the SAM-dependent methylations of uroporphyrinogen III at position C-2 and C-7 to form precorrin-2 via precorrin-1. Then it catalyzes the NAD-dependent ring dehydrogenation of precorrin-2 to yield sirohydrochlorin. Finally, it catalyzes the ferrochelation of sirohydrochlorin to yield siroheme.</text>
</comment>
<comment type="catalytic activity">
    <reaction evidence="1">
        <text>uroporphyrinogen III + 2 S-adenosyl-L-methionine = precorrin-2 + 2 S-adenosyl-L-homocysteine + H(+)</text>
        <dbReference type="Rhea" id="RHEA:32459"/>
        <dbReference type="ChEBI" id="CHEBI:15378"/>
        <dbReference type="ChEBI" id="CHEBI:57308"/>
        <dbReference type="ChEBI" id="CHEBI:57856"/>
        <dbReference type="ChEBI" id="CHEBI:58827"/>
        <dbReference type="ChEBI" id="CHEBI:59789"/>
        <dbReference type="EC" id="2.1.1.107"/>
    </reaction>
</comment>
<comment type="catalytic activity">
    <reaction evidence="1">
        <text>precorrin-2 + NAD(+) = sirohydrochlorin + NADH + 2 H(+)</text>
        <dbReference type="Rhea" id="RHEA:15613"/>
        <dbReference type="ChEBI" id="CHEBI:15378"/>
        <dbReference type="ChEBI" id="CHEBI:57540"/>
        <dbReference type="ChEBI" id="CHEBI:57945"/>
        <dbReference type="ChEBI" id="CHEBI:58351"/>
        <dbReference type="ChEBI" id="CHEBI:58827"/>
        <dbReference type="EC" id="1.3.1.76"/>
    </reaction>
</comment>
<comment type="catalytic activity">
    <reaction evidence="1">
        <text>siroheme + 2 H(+) = sirohydrochlorin + Fe(2+)</text>
        <dbReference type="Rhea" id="RHEA:24360"/>
        <dbReference type="ChEBI" id="CHEBI:15378"/>
        <dbReference type="ChEBI" id="CHEBI:29033"/>
        <dbReference type="ChEBI" id="CHEBI:58351"/>
        <dbReference type="ChEBI" id="CHEBI:60052"/>
        <dbReference type="EC" id="4.99.1.4"/>
    </reaction>
</comment>
<comment type="pathway">
    <text evidence="1">Cofactor biosynthesis; adenosylcobalamin biosynthesis; precorrin-2 from uroporphyrinogen III: step 1/1.</text>
</comment>
<comment type="pathway">
    <text evidence="1">Cofactor biosynthesis; adenosylcobalamin biosynthesis; sirohydrochlorin from precorrin-2: step 1/1.</text>
</comment>
<comment type="pathway">
    <text evidence="1">Porphyrin-containing compound metabolism; siroheme biosynthesis; precorrin-2 from uroporphyrinogen III: step 1/1.</text>
</comment>
<comment type="pathway">
    <text evidence="1">Porphyrin-containing compound metabolism; siroheme biosynthesis; siroheme from sirohydrochlorin: step 1/1.</text>
</comment>
<comment type="pathway">
    <text evidence="1">Porphyrin-containing compound metabolism; siroheme biosynthesis; sirohydrochlorin from precorrin-2: step 1/1.</text>
</comment>
<comment type="similarity">
    <text evidence="1">In the N-terminal section; belongs to the precorrin-2 dehydrogenase / sirohydrochlorin ferrochelatase family.</text>
</comment>
<comment type="similarity">
    <text evidence="1">In the C-terminal section; belongs to the precorrin methyltransferase family.</text>
</comment>
<dbReference type="EC" id="2.1.1.107" evidence="1"/>
<dbReference type="EC" id="1.3.1.76" evidence="1"/>
<dbReference type="EC" id="4.99.1.4" evidence="1"/>
<dbReference type="EMBL" id="CP000116">
    <property type="protein sequence ID" value="AAZ98424.1"/>
    <property type="molecule type" value="Genomic_DNA"/>
</dbReference>
<dbReference type="RefSeq" id="WP_011312983.1">
    <property type="nucleotide sequence ID" value="NC_007404.1"/>
</dbReference>
<dbReference type="SMR" id="Q3SG32"/>
<dbReference type="STRING" id="292415.Tbd_2471"/>
<dbReference type="KEGG" id="tbd:Tbd_2471"/>
<dbReference type="eggNOG" id="COG0007">
    <property type="taxonomic scope" value="Bacteria"/>
</dbReference>
<dbReference type="eggNOG" id="COG1648">
    <property type="taxonomic scope" value="Bacteria"/>
</dbReference>
<dbReference type="HOGENOM" id="CLU_011276_2_1_4"/>
<dbReference type="OrthoDB" id="9815856at2"/>
<dbReference type="UniPathway" id="UPA00148">
    <property type="reaction ID" value="UER00211"/>
</dbReference>
<dbReference type="UniPathway" id="UPA00148">
    <property type="reaction ID" value="UER00222"/>
</dbReference>
<dbReference type="UniPathway" id="UPA00262">
    <property type="reaction ID" value="UER00211"/>
</dbReference>
<dbReference type="UniPathway" id="UPA00262">
    <property type="reaction ID" value="UER00222"/>
</dbReference>
<dbReference type="UniPathway" id="UPA00262">
    <property type="reaction ID" value="UER00376"/>
</dbReference>
<dbReference type="Proteomes" id="UP000008291">
    <property type="component" value="Chromosome"/>
</dbReference>
<dbReference type="GO" id="GO:0051287">
    <property type="term" value="F:NAD binding"/>
    <property type="evidence" value="ECO:0007669"/>
    <property type="project" value="InterPro"/>
</dbReference>
<dbReference type="GO" id="GO:0043115">
    <property type="term" value="F:precorrin-2 dehydrogenase activity"/>
    <property type="evidence" value="ECO:0007669"/>
    <property type="project" value="UniProtKB-UniRule"/>
</dbReference>
<dbReference type="GO" id="GO:0051266">
    <property type="term" value="F:sirohydrochlorin ferrochelatase activity"/>
    <property type="evidence" value="ECO:0007669"/>
    <property type="project" value="UniProtKB-EC"/>
</dbReference>
<dbReference type="GO" id="GO:0004851">
    <property type="term" value="F:uroporphyrin-III C-methyltransferase activity"/>
    <property type="evidence" value="ECO:0007669"/>
    <property type="project" value="UniProtKB-UniRule"/>
</dbReference>
<dbReference type="GO" id="GO:0009236">
    <property type="term" value="P:cobalamin biosynthetic process"/>
    <property type="evidence" value="ECO:0007669"/>
    <property type="project" value="UniProtKB-UniRule"/>
</dbReference>
<dbReference type="GO" id="GO:0032259">
    <property type="term" value="P:methylation"/>
    <property type="evidence" value="ECO:0007669"/>
    <property type="project" value="UniProtKB-KW"/>
</dbReference>
<dbReference type="GO" id="GO:0019354">
    <property type="term" value="P:siroheme biosynthetic process"/>
    <property type="evidence" value="ECO:0007669"/>
    <property type="project" value="UniProtKB-UniRule"/>
</dbReference>
<dbReference type="CDD" id="cd11642">
    <property type="entry name" value="SUMT"/>
    <property type="match status" value="1"/>
</dbReference>
<dbReference type="FunFam" id="3.30.160.110:FF:000001">
    <property type="entry name" value="Siroheme synthase"/>
    <property type="match status" value="1"/>
</dbReference>
<dbReference type="FunFam" id="3.30.950.10:FF:000001">
    <property type="entry name" value="Siroheme synthase"/>
    <property type="match status" value="1"/>
</dbReference>
<dbReference type="FunFam" id="3.40.1010.10:FF:000001">
    <property type="entry name" value="Siroheme synthase"/>
    <property type="match status" value="1"/>
</dbReference>
<dbReference type="Gene3D" id="3.40.1010.10">
    <property type="entry name" value="Cobalt-precorrin-4 Transmethylase, Domain 1"/>
    <property type="match status" value="1"/>
</dbReference>
<dbReference type="Gene3D" id="3.30.950.10">
    <property type="entry name" value="Methyltransferase, Cobalt-precorrin-4 Transmethylase, Domain 2"/>
    <property type="match status" value="1"/>
</dbReference>
<dbReference type="Gene3D" id="3.40.50.720">
    <property type="entry name" value="NAD(P)-binding Rossmann-like Domain"/>
    <property type="match status" value="1"/>
</dbReference>
<dbReference type="Gene3D" id="1.10.8.210">
    <property type="entry name" value="Sirohaem synthase, dimerisation domain"/>
    <property type="match status" value="1"/>
</dbReference>
<dbReference type="Gene3D" id="3.30.160.110">
    <property type="entry name" value="Siroheme synthase, domain 2"/>
    <property type="match status" value="1"/>
</dbReference>
<dbReference type="HAMAP" id="MF_01646">
    <property type="entry name" value="Siroheme_synth"/>
    <property type="match status" value="1"/>
</dbReference>
<dbReference type="InterPro" id="IPR000878">
    <property type="entry name" value="4pyrrol_Mease"/>
</dbReference>
<dbReference type="InterPro" id="IPR035996">
    <property type="entry name" value="4pyrrol_Methylase_sf"/>
</dbReference>
<dbReference type="InterPro" id="IPR014777">
    <property type="entry name" value="4pyrrole_Mease_sub1"/>
</dbReference>
<dbReference type="InterPro" id="IPR014776">
    <property type="entry name" value="4pyrrole_Mease_sub2"/>
</dbReference>
<dbReference type="InterPro" id="IPR006366">
    <property type="entry name" value="CobA/CysG_C"/>
</dbReference>
<dbReference type="InterPro" id="IPR036291">
    <property type="entry name" value="NAD(P)-bd_dom_sf"/>
</dbReference>
<dbReference type="InterPro" id="IPR050161">
    <property type="entry name" value="Siro_Cobalamin_biosynth"/>
</dbReference>
<dbReference type="InterPro" id="IPR037115">
    <property type="entry name" value="Sirohaem_synt_dimer_dom_sf"/>
</dbReference>
<dbReference type="InterPro" id="IPR012409">
    <property type="entry name" value="Sirohaem_synth"/>
</dbReference>
<dbReference type="InterPro" id="IPR028281">
    <property type="entry name" value="Sirohaem_synthase_central"/>
</dbReference>
<dbReference type="InterPro" id="IPR019478">
    <property type="entry name" value="Sirohaem_synthase_dimer_dom"/>
</dbReference>
<dbReference type="InterPro" id="IPR006367">
    <property type="entry name" value="Sirohaem_synthase_N"/>
</dbReference>
<dbReference type="NCBIfam" id="TIGR01469">
    <property type="entry name" value="cobA_cysG_Cterm"/>
    <property type="match status" value="1"/>
</dbReference>
<dbReference type="NCBIfam" id="TIGR01470">
    <property type="entry name" value="cysG_Nterm"/>
    <property type="match status" value="1"/>
</dbReference>
<dbReference type="NCBIfam" id="NF004790">
    <property type="entry name" value="PRK06136.1"/>
    <property type="match status" value="1"/>
</dbReference>
<dbReference type="NCBIfam" id="NF007922">
    <property type="entry name" value="PRK10637.1"/>
    <property type="match status" value="1"/>
</dbReference>
<dbReference type="PANTHER" id="PTHR45790:SF1">
    <property type="entry name" value="SIROHEME SYNTHASE"/>
    <property type="match status" value="1"/>
</dbReference>
<dbReference type="PANTHER" id="PTHR45790">
    <property type="entry name" value="SIROHEME SYNTHASE-RELATED"/>
    <property type="match status" value="1"/>
</dbReference>
<dbReference type="Pfam" id="PF10414">
    <property type="entry name" value="CysG_dimeriser"/>
    <property type="match status" value="1"/>
</dbReference>
<dbReference type="Pfam" id="PF13241">
    <property type="entry name" value="NAD_binding_7"/>
    <property type="match status" value="1"/>
</dbReference>
<dbReference type="Pfam" id="PF14824">
    <property type="entry name" value="Sirohm_synth_M"/>
    <property type="match status" value="1"/>
</dbReference>
<dbReference type="Pfam" id="PF00590">
    <property type="entry name" value="TP_methylase"/>
    <property type="match status" value="1"/>
</dbReference>
<dbReference type="PIRSF" id="PIRSF036426">
    <property type="entry name" value="Sirohaem_synth"/>
    <property type="match status" value="1"/>
</dbReference>
<dbReference type="SUPFAM" id="SSF51735">
    <property type="entry name" value="NAD(P)-binding Rossmann-fold domains"/>
    <property type="match status" value="1"/>
</dbReference>
<dbReference type="SUPFAM" id="SSF75615">
    <property type="entry name" value="Siroheme synthase middle domains-like"/>
    <property type="match status" value="1"/>
</dbReference>
<dbReference type="SUPFAM" id="SSF53790">
    <property type="entry name" value="Tetrapyrrole methylase"/>
    <property type="match status" value="1"/>
</dbReference>
<accession>Q3SG32</accession>
<gene>
    <name evidence="1" type="primary">cysG</name>
    <name type="ordered locus">Tbd_2471</name>
</gene>
<proteinExistence type="inferred from homology"/>
<name>CYSG_THIDA</name>
<feature type="chain" id="PRO_0000330565" description="Siroheme synthase">
    <location>
        <begin position="1"/>
        <end position="479"/>
    </location>
</feature>
<feature type="region of interest" description="Precorrin-2 dehydrogenase /sirohydrochlorin ferrochelatase" evidence="1">
    <location>
        <begin position="1"/>
        <end position="202"/>
    </location>
</feature>
<feature type="region of interest" description="Uroporphyrinogen-III C-methyltransferase" evidence="1">
    <location>
        <begin position="217"/>
        <end position="479"/>
    </location>
</feature>
<feature type="active site" description="Proton acceptor" evidence="1">
    <location>
        <position position="249"/>
    </location>
</feature>
<feature type="active site" description="Proton donor" evidence="1">
    <location>
        <position position="271"/>
    </location>
</feature>
<feature type="binding site" evidence="1">
    <location>
        <begin position="22"/>
        <end position="23"/>
    </location>
    <ligand>
        <name>NAD(+)</name>
        <dbReference type="ChEBI" id="CHEBI:57540"/>
    </ligand>
</feature>
<feature type="binding site" evidence="1">
    <location>
        <begin position="43"/>
        <end position="44"/>
    </location>
    <ligand>
        <name>NAD(+)</name>
        <dbReference type="ChEBI" id="CHEBI:57540"/>
    </ligand>
</feature>
<feature type="binding site" evidence="1">
    <location>
        <position position="226"/>
    </location>
    <ligand>
        <name>S-adenosyl-L-methionine</name>
        <dbReference type="ChEBI" id="CHEBI:59789"/>
    </ligand>
</feature>
<feature type="binding site" evidence="1">
    <location>
        <begin position="302"/>
        <end position="304"/>
    </location>
    <ligand>
        <name>S-adenosyl-L-methionine</name>
        <dbReference type="ChEBI" id="CHEBI:59789"/>
    </ligand>
</feature>
<feature type="binding site" evidence="1">
    <location>
        <position position="307"/>
    </location>
    <ligand>
        <name>S-adenosyl-L-methionine</name>
        <dbReference type="ChEBI" id="CHEBI:59789"/>
    </ligand>
</feature>
<feature type="binding site" evidence="1">
    <location>
        <begin position="332"/>
        <end position="333"/>
    </location>
    <ligand>
        <name>S-adenosyl-L-methionine</name>
        <dbReference type="ChEBI" id="CHEBI:59789"/>
    </ligand>
</feature>
<feature type="binding site" evidence="1">
    <location>
        <position position="384"/>
    </location>
    <ligand>
        <name>S-adenosyl-L-methionine</name>
        <dbReference type="ChEBI" id="CHEBI:59789"/>
    </ligand>
</feature>
<feature type="binding site" evidence="1">
    <location>
        <position position="413"/>
    </location>
    <ligand>
        <name>S-adenosyl-L-methionine</name>
        <dbReference type="ChEBI" id="CHEBI:59789"/>
    </ligand>
</feature>
<feature type="modified residue" description="Phosphoserine" evidence="1">
    <location>
        <position position="128"/>
    </location>
</feature>
<keyword id="KW-0169">Cobalamin biosynthesis</keyword>
<keyword id="KW-0456">Lyase</keyword>
<keyword id="KW-0489">Methyltransferase</keyword>
<keyword id="KW-0511">Multifunctional enzyme</keyword>
<keyword id="KW-0520">NAD</keyword>
<keyword id="KW-0560">Oxidoreductase</keyword>
<keyword id="KW-0597">Phosphoprotein</keyword>
<keyword id="KW-0627">Porphyrin biosynthesis</keyword>
<keyword id="KW-1185">Reference proteome</keyword>
<keyword id="KW-0949">S-adenosyl-L-methionine</keyword>
<keyword id="KW-0808">Transferase</keyword>
<protein>
    <recommendedName>
        <fullName evidence="1">Siroheme synthase</fullName>
    </recommendedName>
    <domain>
        <recommendedName>
            <fullName evidence="1">Uroporphyrinogen-III C-methyltransferase</fullName>
            <shortName evidence="1">Urogen III methylase</shortName>
            <ecNumber evidence="1">2.1.1.107</ecNumber>
        </recommendedName>
        <alternativeName>
            <fullName evidence="1">SUMT</fullName>
        </alternativeName>
        <alternativeName>
            <fullName evidence="1">Uroporphyrinogen III methylase</fullName>
            <shortName evidence="1">UROM</shortName>
        </alternativeName>
    </domain>
    <domain>
        <recommendedName>
            <fullName evidence="1">Precorrin-2 dehydrogenase</fullName>
            <ecNumber evidence="1">1.3.1.76</ecNumber>
        </recommendedName>
    </domain>
    <domain>
        <recommendedName>
            <fullName evidence="1">Sirohydrochlorin ferrochelatase</fullName>
            <ecNumber evidence="1">4.99.1.4</ecNumber>
        </recommendedName>
    </domain>
</protein>
<organism>
    <name type="scientific">Thiobacillus denitrificans (strain ATCC 25259 / T1)</name>
    <dbReference type="NCBI Taxonomy" id="292415"/>
    <lineage>
        <taxon>Bacteria</taxon>
        <taxon>Pseudomonadati</taxon>
        <taxon>Pseudomonadota</taxon>
        <taxon>Betaproteobacteria</taxon>
        <taxon>Nitrosomonadales</taxon>
        <taxon>Thiobacillaceae</taxon>
        <taxon>Thiobacillus</taxon>
    </lineage>
</organism>
<reference key="1">
    <citation type="journal article" date="2006" name="J. Bacteriol.">
        <title>The genome sequence of the obligately chemolithoautotrophic, facultatively anaerobic bacterium Thiobacillus denitrificans.</title>
        <authorList>
            <person name="Beller H.R."/>
            <person name="Chain P.S."/>
            <person name="Letain T.E."/>
            <person name="Chakicherla A."/>
            <person name="Larimer F.W."/>
            <person name="Richardson P.M."/>
            <person name="Coleman M.A."/>
            <person name="Wood A.P."/>
            <person name="Kelly D.P."/>
        </authorList>
    </citation>
    <scope>NUCLEOTIDE SEQUENCE [LARGE SCALE GENOMIC DNA]</scope>
    <source>
        <strain>ATCC 25259 / T1</strain>
    </source>
</reference>
<evidence type="ECO:0000255" key="1">
    <source>
        <dbReference type="HAMAP-Rule" id="MF_01646"/>
    </source>
</evidence>